<organismHost>
    <name type="scientific">Gallus gallus</name>
    <name type="common">Chicken</name>
    <dbReference type="NCBI Taxonomy" id="9031"/>
</organismHost>
<sequence>MEAVIKVISSACKTYCGKTSPSKKEIGAMLSLLQKEGLLMSPSDLYSPGSWDPITAALSQRAMILGKSGELKTWGLVLGALKAAREEQVTSEQAKFWLGLGGGRVSPPGPECIEKPATERRIDKGEEVGETTVQRDAKMAPEETATPKTVGTSCYHCGTAIGCNCATASAPPPPYVGSGLYPSLAGVGEQQGQGGDTPPGAEQSRAEPGHAGQAPGPALTDWARVREELASTGPPVVAMPVVIKTEGPAWTPLEPKLITRLADTVRTKGLRSPITMAEVEALMSSPLLPHDVTNLMRVILGPAPYALWMDAWGVQLQTVIAAATRDPRHPANGQGRGERTNLNRLKGLADGMVGNPQGQAALLRPGELVAITASALQAFREVARLAEPAGPWADIMQGPSESFVDFANRLIKAVEGSDLPPSARAPVIIDCFRQKSQPDIQQLIRTAPSTLTTPGEIIKYVLDRQKTAPLTDQGIAAAMSSAIQPLIMAVVNRERDGQTGSGGRARGLCYTCGSPGHYQAQCPKKRKSGNSRERCQLCNGMGHNAKQCRKRDGNQGQRPGKGLSSGPWPGPEPPAVSLAMTMEHKDRPLVRVILTNTGSHPVKQRSVYITALLDSGADITIISEEDWPTDWPVMEAANPQIHGIGGGIPMRKSRDMIELGVINRDGSLERPLLLFPAVAMVRGSILGRDCLQGLGLRLTNLIGRATVLTVALHLAIPLKWKPDHTPVWIDQWPLPEGKLVALTQLVEKELQLGHIEPSLSCWNTPVFVIRKASGSYRLLHDLRAVNAKLVPFGAVQQGAPVLSALPRGWPLMVLDLKDCFFSIPLAEQDREAFAFTLPSVNNQAPARRFQWKVLPQGMTCSPTICQLVVGQVLEPLRLKHPSLCMLHYMDDLLLAASSHDGLEAAGEEVISTLERAGFTISPDKVQREPGVQYLGYKLGSTYVAPVGLVAEPRIATLWDVQKLVGSLQWLRPALGIPPRLMGPFYEQLRGSDPNEAREWNLDMKMAWREIVRLSTTAALERWDPALPLEGAVARCEQGAIGVLGQGLSTHPRPCLWLFSTQPTKAFTAWLEVLTLLITKLRASAVRTFGKEVDILLLPACFREDLPLPEGILLALKGFAGKIRSSDTPSIFDIARPLHVSLKVRVTDHPVPGPTVFTDASSSTHKGVVVWREGPRWEIKEIADLGASVQQLEARAVAMALLLWPTTPTNVVTDSAFVAKMLLKMGQEGVPSTAAAFILEDALSQRSAMAAVLHVRSHSEVPGFFTEGNDVADSQATFQAYPLREAKDLHTALHIGPRALSKACNISMQQAREVVQTCPHCNSAPALEAGVNPRGLGPLQIWQTDFTLEPRMAPRSWLAVTVDTASSAIVVTQHGRVTSVAVQHHWATAIAVLGRPKAIKTDNGSCFTSKSTREWLARWGIAHTTGIPGNSQGQAMVERANRLLKDRIRVLAEGDGFMKRIPTSKQGELLAKAMYALNHFERGENTKTPIQKHWRPTVLTEGPPVKIRIETGEWEKGWNVLVWGRGYAAVKNRDTDKVIWVPSRKVKPDITQKDEVTKKDEASPLFAGISDWIPWEDEQEGLQGETASNKQERPGEDTLAANES</sequence>
<name>POL_RSVP</name>
<evidence type="ECO:0000250" key="1"/>
<evidence type="ECO:0000250" key="2">
    <source>
        <dbReference type="UniProtKB" id="O92956"/>
    </source>
</evidence>
<evidence type="ECO:0000250" key="3">
    <source>
        <dbReference type="UniProtKB" id="P03322"/>
    </source>
</evidence>
<evidence type="ECO:0000250" key="4">
    <source>
        <dbReference type="UniProtKB" id="P0C776"/>
    </source>
</evidence>
<evidence type="ECO:0000255" key="5">
    <source>
        <dbReference type="PROSITE-ProRule" id="PRU00047"/>
    </source>
</evidence>
<evidence type="ECO:0000255" key="6">
    <source>
        <dbReference type="PROSITE-ProRule" id="PRU00275"/>
    </source>
</evidence>
<evidence type="ECO:0000255" key="7">
    <source>
        <dbReference type="PROSITE-ProRule" id="PRU00405"/>
    </source>
</evidence>
<evidence type="ECO:0000255" key="8">
    <source>
        <dbReference type="PROSITE-ProRule" id="PRU00408"/>
    </source>
</evidence>
<evidence type="ECO:0000255" key="9">
    <source>
        <dbReference type="PROSITE-ProRule" id="PRU00450"/>
    </source>
</evidence>
<evidence type="ECO:0000255" key="10">
    <source>
        <dbReference type="PROSITE-ProRule" id="PRU00457"/>
    </source>
</evidence>
<evidence type="ECO:0000255" key="11">
    <source>
        <dbReference type="PROSITE-ProRule" id="PRU00506"/>
    </source>
</evidence>
<evidence type="ECO:0000255" key="12">
    <source>
        <dbReference type="PROSITE-ProRule" id="PRU10094"/>
    </source>
</evidence>
<evidence type="ECO:0000256" key="13">
    <source>
        <dbReference type="SAM" id="MobiDB-lite"/>
    </source>
</evidence>
<evidence type="ECO:0000269" key="14">
    <source>
    </source>
</evidence>
<evidence type="ECO:0000269" key="15">
    <source>
    </source>
</evidence>
<evidence type="ECO:0000269" key="16">
    <source>
    </source>
</evidence>
<evidence type="ECO:0000269" key="17">
    <source>
    </source>
</evidence>
<evidence type="ECO:0000269" key="18">
    <source>
    </source>
</evidence>
<evidence type="ECO:0000269" key="19">
    <source>
    </source>
</evidence>
<evidence type="ECO:0000269" key="20">
    <source>
    </source>
</evidence>
<evidence type="ECO:0000269" key="21">
    <source>
    </source>
</evidence>
<evidence type="ECO:0000269" key="22">
    <source>
    </source>
</evidence>
<evidence type="ECO:0000269" key="23">
    <source>
    </source>
</evidence>
<evidence type="ECO:0000303" key="24">
    <source>
    </source>
</evidence>
<evidence type="ECO:0000303" key="25">
    <source>
    </source>
</evidence>
<evidence type="ECO:0000305" key="26"/>
<evidence type="ECO:0000305" key="27">
    <source>
    </source>
</evidence>
<evidence type="ECO:0007744" key="28">
    <source>
        <dbReference type="PDB" id="1C0M"/>
    </source>
</evidence>
<evidence type="ECO:0007744" key="29">
    <source>
        <dbReference type="PDB" id="1C1A"/>
    </source>
</evidence>
<evidence type="ECO:0007744" key="30">
    <source>
        <dbReference type="PDB" id="3TIR"/>
    </source>
</evidence>
<evidence type="ECO:0007744" key="31">
    <source>
        <dbReference type="PDB" id="4FW1"/>
    </source>
</evidence>
<evidence type="ECO:0007744" key="32">
    <source>
        <dbReference type="PDB" id="4FW2"/>
    </source>
</evidence>
<evidence type="ECO:0007744" key="33">
    <source>
        <dbReference type="PDB" id="5EJK"/>
    </source>
</evidence>
<evidence type="ECO:0007829" key="34">
    <source>
        <dbReference type="PDB" id="1C0M"/>
    </source>
</evidence>
<evidence type="ECO:0007829" key="35">
    <source>
        <dbReference type="PDB" id="4FW1"/>
    </source>
</evidence>
<evidence type="ECO:0007829" key="36">
    <source>
        <dbReference type="PDB" id="5KZ9"/>
    </source>
</evidence>
<evidence type="ECO:0007829" key="37">
    <source>
        <dbReference type="PDB" id="5KZA"/>
    </source>
</evidence>
<evidence type="ECO:0007829" key="38">
    <source>
        <dbReference type="PDB" id="6CE5"/>
    </source>
</evidence>
<evidence type="ECO:0007829" key="39">
    <source>
        <dbReference type="PDB" id="7JN3"/>
    </source>
</evidence>
<feature type="chain" id="PRO_0000442482" description="Gag-Pol polyprotein">
    <location>
        <begin position="1"/>
        <end position="1603"/>
    </location>
</feature>
<feature type="chain" id="PRO_5000053588" description="Matrix protein p19">
    <location>
        <begin position="1"/>
        <end position="155"/>
    </location>
</feature>
<feature type="chain" id="PRO_0000397068" description="p2A">
    <location>
        <begin position="156"/>
        <end position="166"/>
    </location>
</feature>
<feature type="chain" id="PRO_0000397069" description="p2B">
    <location>
        <begin position="167"/>
        <end position="177"/>
    </location>
</feature>
<feature type="chain" id="PRO_5000053589" description="p10">
    <location>
        <begin position="178"/>
        <end position="239"/>
    </location>
</feature>
<feature type="chain" id="PRO_5000053590" description="Capsid protein p27, alternate cleaved 2">
    <location>
        <begin position="240"/>
        <end position="479"/>
    </location>
</feature>
<feature type="chain" id="PRO_0000442483" description="Capsid protein p27, alternate cleaved 1">
    <location>
        <begin position="240"/>
        <end position="476"/>
    </location>
</feature>
<feature type="peptide" id="PRO_0000397070" description="Spacer peptide">
    <location>
        <begin position="480"/>
        <end position="488"/>
    </location>
</feature>
<feature type="chain" id="PRO_5000053591" description="Nucleocapsid protein p12">
    <location>
        <begin position="489"/>
        <end position="577"/>
    </location>
</feature>
<feature type="chain" id="PRO_5000053592" description="Protease p15">
    <location>
        <begin position="578"/>
        <end position="708"/>
    </location>
</feature>
<feature type="chain" id="PRO_0000397071" description="Reverse transcriptase beta-subunit">
    <location>
        <begin position="709"/>
        <end position="1567"/>
    </location>
</feature>
<feature type="chain" id="PRO_0000040986" description="Reverse transcriptase alpha-subunit">
    <location>
        <begin position="709"/>
        <end position="1280"/>
    </location>
</feature>
<feature type="chain" id="PRO_0000040987" description="Integrase">
    <location>
        <begin position="1281"/>
        <end position="1567"/>
    </location>
</feature>
<feature type="chain" id="PRO_0000397072" description="p4">
    <location>
        <begin position="1568"/>
        <end position="1603"/>
    </location>
</feature>
<feature type="domain" description="Peptidase A2" evidence="6">
    <location>
        <begin position="609"/>
        <end position="690"/>
    </location>
</feature>
<feature type="domain" description="Reverse transcriptase" evidence="7">
    <location>
        <begin position="750"/>
        <end position="938"/>
    </location>
</feature>
<feature type="domain" description="RNase H type-1" evidence="8">
    <location>
        <begin position="1149"/>
        <end position="1280"/>
    </location>
</feature>
<feature type="domain" description="Integrase catalytic" evidence="10">
    <location>
        <begin position="1333"/>
        <end position="1496"/>
    </location>
</feature>
<feature type="zinc finger region" description="CCHC-type 1" evidence="5">
    <location>
        <begin position="507"/>
        <end position="524"/>
    </location>
</feature>
<feature type="zinc finger region" description="CCHC-type 2" evidence="5">
    <location>
        <begin position="533"/>
        <end position="550"/>
    </location>
</feature>
<feature type="zinc finger region" description="Integrase-type" evidence="9">
    <location>
        <begin position="1280"/>
        <end position="1321"/>
    </location>
</feature>
<feature type="DNA-binding region" description="Integrase-type" evidence="11">
    <location>
        <begin position="1502"/>
        <end position="1550"/>
    </location>
</feature>
<feature type="region of interest" description="Disordered" evidence="13">
    <location>
        <begin position="128"/>
        <end position="150"/>
    </location>
</feature>
<feature type="region of interest" description="Disordered" evidence="13">
    <location>
        <begin position="181"/>
        <end position="217"/>
    </location>
</feature>
<feature type="region of interest" description="Involved in capsid protein dimerization" evidence="3">
    <location>
        <begin position="217"/>
        <end position="259"/>
    </location>
</feature>
<feature type="region of interest" description="Involved in capsid protein dimerization" evidence="3">
    <location>
        <begin position="290"/>
        <end position="298"/>
    </location>
</feature>
<feature type="region of interest" description="Involved in capsid protein dimerization" evidence="3">
    <location>
        <begin position="351"/>
        <end position="362"/>
    </location>
</feature>
<feature type="region of interest" description="Disordered" evidence="13">
    <location>
        <begin position="543"/>
        <end position="575"/>
    </location>
</feature>
<feature type="region of interest" description="Involved in homooctamerization" evidence="21">
    <location>
        <begin position="1548"/>
        <end position="1567"/>
    </location>
</feature>
<feature type="region of interest" description="Disordered" evidence="13">
    <location>
        <begin position="1569"/>
        <end position="1603"/>
    </location>
</feature>
<feature type="short sequence motif" description="PPXY motif" evidence="18">
    <location>
        <begin position="172"/>
        <end position="175"/>
    </location>
</feature>
<feature type="short sequence motif" description="LYPX(n)L motif" evidence="18">
    <location>
        <begin position="180"/>
        <end position="184"/>
    </location>
</feature>
<feature type="short sequence motif" description="Nuclear export signal" evidence="3">
    <location>
        <begin position="219"/>
        <end position="229"/>
    </location>
</feature>
<feature type="short sequence motif" description="Nuclear/nucleolar localization signal" evidence="3">
    <location>
        <begin position="524"/>
        <end position="527"/>
    </location>
</feature>
<feature type="compositionally biased region" description="Basic and acidic residues" evidence="13">
    <location>
        <begin position="128"/>
        <end position="141"/>
    </location>
</feature>
<feature type="active site" description="For protease activity; shared with dimeric partner" evidence="12">
    <location>
        <position position="614"/>
    </location>
</feature>
<feature type="binding site" evidence="7">
    <location>
        <position position="815"/>
    </location>
    <ligand>
        <name>Mg(2+)</name>
        <dbReference type="ChEBI" id="CHEBI:18420"/>
        <label>1</label>
        <note>catalytic; for reverse transcriptase activity</note>
    </ligand>
</feature>
<feature type="binding site" evidence="15">
    <location>
        <position position="890"/>
    </location>
    <ligand>
        <name>Mg(2+)</name>
        <dbReference type="ChEBI" id="CHEBI:18420"/>
        <label>1</label>
        <note>catalytic; for reverse transcriptase activity</note>
    </ligand>
</feature>
<feature type="binding site" evidence="7">
    <location>
        <position position="891"/>
    </location>
    <ligand>
        <name>Mg(2+)</name>
        <dbReference type="ChEBI" id="CHEBI:18420"/>
        <label>1</label>
        <note>catalytic; for reverse transcriptase activity</note>
    </ligand>
</feature>
<feature type="binding site" evidence="7">
    <location>
        <position position="1158"/>
    </location>
    <ligand>
        <name>Mg(2+)</name>
        <dbReference type="ChEBI" id="CHEBI:18420"/>
        <label>2</label>
        <note>catalytic; for RNase H activity</note>
    </ligand>
</feature>
<feature type="binding site" evidence="7">
    <location>
        <position position="1192"/>
    </location>
    <ligand>
        <name>Mg(2+)</name>
        <dbReference type="ChEBI" id="CHEBI:18420"/>
        <label>2</label>
        <note>catalytic; for RNase H activity</note>
    </ligand>
</feature>
<feature type="binding site" evidence="7 15">
    <location>
        <position position="1213"/>
    </location>
    <ligand>
        <name>Mg(2+)</name>
        <dbReference type="ChEBI" id="CHEBI:18420"/>
        <label>2</label>
        <note>catalytic; for RNase H activity</note>
    </ligand>
</feature>
<feature type="binding site" evidence="7">
    <location>
        <position position="1272"/>
    </location>
    <ligand>
        <name>Mg(2+)</name>
        <dbReference type="ChEBI" id="CHEBI:18420"/>
        <label>2</label>
        <note>catalytic; for RNase H activity</note>
    </ligand>
</feature>
<feature type="binding site" evidence="9">
    <location>
        <position position="1289"/>
    </location>
    <ligand>
        <name>Zn(2+)</name>
        <dbReference type="ChEBI" id="CHEBI:29105"/>
    </ligand>
</feature>
<feature type="binding site" evidence="9">
    <location>
        <position position="1293"/>
    </location>
    <ligand>
        <name>Zn(2+)</name>
        <dbReference type="ChEBI" id="CHEBI:29105"/>
    </ligand>
</feature>
<feature type="binding site" evidence="9 20">
    <location>
        <position position="1317"/>
    </location>
    <ligand>
        <name>Zn(2+)</name>
        <dbReference type="ChEBI" id="CHEBI:29105"/>
    </ligand>
</feature>
<feature type="binding site" evidence="9 20">
    <location>
        <position position="1320"/>
    </location>
    <ligand>
        <name>Zn(2+)</name>
        <dbReference type="ChEBI" id="CHEBI:29105"/>
    </ligand>
</feature>
<feature type="binding site" evidence="7 14">
    <location>
        <position position="1344"/>
    </location>
    <ligand>
        <name>Mg(2+)</name>
        <dbReference type="ChEBI" id="CHEBI:18420"/>
        <label>3</label>
        <note>catalytic; for integrase activity</note>
    </ligand>
</feature>
<feature type="binding site" evidence="7 14">
    <location>
        <position position="1401"/>
    </location>
    <ligand>
        <name>Mg(2+)</name>
        <dbReference type="ChEBI" id="CHEBI:18420"/>
        <label>3</label>
        <note>catalytic; for integrase activity</note>
    </ligand>
</feature>
<feature type="binding site" evidence="14">
    <location>
        <position position="1437"/>
    </location>
    <ligand>
        <name>Mg(2+)</name>
        <dbReference type="ChEBI" id="CHEBI:18420"/>
        <label>3</label>
        <note>catalytic; for integrase activity</note>
    </ligand>
</feature>
<feature type="site" description="Cleavage; by viral protease p15" evidence="3">
    <location>
        <begin position="155"/>
        <end position="156"/>
    </location>
</feature>
<feature type="site" description="Cleavage; by viral protease p15" evidence="3">
    <location>
        <begin position="166"/>
        <end position="167"/>
    </location>
</feature>
<feature type="site" description="Cleavage; by viral protease p15" evidence="3">
    <location>
        <begin position="177"/>
        <end position="178"/>
    </location>
</feature>
<feature type="site" description="Cleavage; by viral protease p15" evidence="3">
    <location>
        <begin position="239"/>
        <end position="240"/>
    </location>
</feature>
<feature type="site" description="Involved in capsid protein dimerization upon acidification" evidence="3">
    <location>
        <position position="418"/>
    </location>
</feature>
<feature type="site" description="Involved in capsid protein dimerization upon acidification" evidence="3">
    <location>
        <position position="430"/>
    </location>
</feature>
<feature type="site" description="Cleavage; by viral protease p15" evidence="3">
    <location>
        <begin position="476"/>
        <end position="477"/>
    </location>
</feature>
<feature type="site" description="Cleavage; by viral protease p15" evidence="3">
    <location>
        <begin position="479"/>
        <end position="480"/>
    </location>
</feature>
<feature type="site" description="Cleavage; by viral protease p15" evidence="3">
    <location>
        <begin position="488"/>
        <end position="489"/>
    </location>
</feature>
<feature type="site" description="Cleavage; by viral protease p15" evidence="3">
    <location>
        <begin position="577"/>
        <end position="578"/>
    </location>
</feature>
<feature type="site" description="Cleavage; by viral protease p15" evidence="24">
    <location>
        <begin position="708"/>
        <end position="709"/>
    </location>
</feature>
<feature type="site" description="Cleavage; by viral protease p15" evidence="24">
    <location>
        <begin position="1280"/>
        <end position="1281"/>
    </location>
</feature>
<feature type="site" description="Cleavage; by viral protease p15">
    <location>
        <begin position="1567"/>
        <end position="1568"/>
    </location>
</feature>
<feature type="mutagenesis site" description="75% loss of budding." evidence="18">
    <original>P</original>
    <variation>A</variation>
    <location>
        <position position="172"/>
    </location>
</feature>
<feature type="mutagenesis site" description="40% loss of budding." evidence="18">
    <original>LYPSL</original>
    <variation>AAASA</variation>
    <location>
        <begin position="180"/>
        <end position="184"/>
    </location>
</feature>
<feature type="mutagenesis site" description="58% loss of polymerase activity when the mutation targets the reverse transcriptase beta subunit; 93% loss of polymerase activity when the mutation targets the reverse transcriptase alpha-subunit." evidence="15">
    <original>D</original>
    <variation>N</variation>
    <location>
        <position position="890"/>
    </location>
</feature>
<feature type="mutagenesis site" description="26% loss of polymerase activity when the mutation targets the reverse transcriptase beta subunit; 56% loss of polymerase activity when the mutation targets the reverse transcriptase alpha-subunit." evidence="15">
    <original>D</original>
    <variation>N</variation>
    <location>
        <position position="1213"/>
    </location>
</feature>
<feature type="sequence conflict" description="In Ref. 4; AAC82561." evidence="26" ref="4">
    <original>T</original>
    <variation>I</variation>
    <location>
        <position position="19"/>
    </location>
</feature>
<feature type="sequence conflict" description="In Ref. 3; CAA48535." evidence="26" ref="3">
    <original>S</original>
    <variation>T</variation>
    <location>
        <position position="59"/>
    </location>
</feature>
<feature type="sequence conflict" description="In Ref. 3; CAA48535 and 4; AAC82561." evidence="26" ref="3 4">
    <original>I</original>
    <variation>V</variation>
    <location>
        <position position="64"/>
    </location>
</feature>
<feature type="sequence conflict" description="In Ref. 4; AAC82561." evidence="26" ref="4">
    <original>V</original>
    <variation>A</variation>
    <location>
        <position position="133"/>
    </location>
</feature>
<feature type="sequence conflict" description="In Ref. 4; AAC82561." evidence="26" ref="4">
    <original>E</original>
    <variation>K</variation>
    <location>
        <position position="143"/>
    </location>
</feature>
<feature type="sequence conflict" description="In Ref. 4; AAC82561." evidence="26" ref="4">
    <original>H</original>
    <variation>Q</variation>
    <location>
        <position position="156"/>
    </location>
</feature>
<feature type="sequence conflict" description="In Ref. 4; AAC82561." evidence="26" ref="4">
    <original>I</original>
    <variation>T</variation>
    <location>
        <position position="161"/>
    </location>
</feature>
<feature type="sequence conflict" description="In Ref. 3; CAA48535." evidence="26" ref="3">
    <original>P</original>
    <variation>R</variation>
    <location>
        <position position="199"/>
    </location>
</feature>
<feature type="sequence conflict" description="In Ref. 4; AAC82561." evidence="26" ref="4">
    <original>P</original>
    <variation>W</variation>
    <location>
        <position position="199"/>
    </location>
</feature>
<feature type="sequence conflict" description="In Ref. 3; CAA48535 and 4; AAC82561." evidence="26" ref="3 4">
    <original>S</original>
    <variation>P</variation>
    <location>
        <position position="204"/>
    </location>
</feature>
<feature type="sequence conflict" description="In Ref. 3; CAA48535 and 4; AAC82561." evidence="26" ref="3 4">
    <original>Q</original>
    <variation>L</variation>
    <location>
        <position position="213"/>
    </location>
</feature>
<feature type="sequence conflict" description="In Ref. 3; CAA48535 and 4; AAC82561." evidence="26" ref="3 4">
    <original>V</original>
    <variation>I</variation>
    <location>
        <position position="225"/>
    </location>
</feature>
<feature type="sequence conflict" description="In Ref. 3; CAA48535." evidence="26" ref="3">
    <original>V</original>
    <variation>M</variation>
    <location>
        <position position="279"/>
    </location>
</feature>
<feature type="sequence conflict" description="In Ref. 3; CAA48535 and 4; AAC82561." evidence="26" ref="3 4">
    <original>N</original>
    <variation>D</variation>
    <location>
        <position position="343"/>
    </location>
</feature>
<feature type="sequence conflict" description="In Ref. 3; CAA48535." evidence="26" ref="3">
    <original>PQ</original>
    <variation>SE</variation>
    <location>
        <begin position="356"/>
        <end position="357"/>
    </location>
</feature>
<feature type="sequence conflict" description="In Ref. 3; CAA48535." evidence="26" ref="3">
    <original>AG</original>
    <variation>TD</variation>
    <location>
        <begin position="389"/>
        <end position="390"/>
    </location>
</feature>
<feature type="sequence conflict" description="In Ref. 4; AAC82561." evidence="26" ref="4">
    <original>M</original>
    <variation>T</variation>
    <location>
        <position position="396"/>
    </location>
</feature>
<feature type="sequence conflict" description="In Ref. 3; CAA48535 and 4; AAC82561." evidence="26" ref="3 4">
    <original>T</original>
    <variation>A</variation>
    <location>
        <position position="446"/>
    </location>
</feature>
<feature type="sequence conflict" description="In Ref. 4; AAC82561." evidence="26" ref="4">
    <original>T</original>
    <variation>I</variation>
    <location>
        <position position="467"/>
    </location>
</feature>
<feature type="sequence conflict" description="In Ref. 3; CAA48535 and 4; AAC82561." evidence="26" ref="3 4">
    <original>I</original>
    <variation>V</variation>
    <location>
        <position position="487"/>
    </location>
</feature>
<feature type="sequence conflict" description="In Ref. 3; CAA48535." evidence="26" ref="3">
    <original>G</original>
    <variation>E</variation>
    <location>
        <position position="507"/>
    </location>
</feature>
<feature type="sequence conflict" description="In Ref. 4; AAC82561." evidence="26" ref="4">
    <original>N</original>
    <variation>D</variation>
    <location>
        <position position="539"/>
    </location>
</feature>
<feature type="sequence conflict" description="In Ref. 4; AAC82561." evidence="26" ref="4">
    <original>K</original>
    <variation>R</variation>
    <location>
        <position position="550"/>
    </location>
</feature>
<feature type="sequence conflict" description="In Ref. 3; CAA48535." evidence="26" ref="3">
    <original>K</original>
    <variation>R</variation>
    <location>
        <position position="561"/>
    </location>
</feature>
<feature type="sequence conflict" description="In Ref. 4; AAC82561." evidence="26" ref="4">
    <original>PWPGPEP</original>
    <variation>SWPVSEQ</variation>
    <location>
        <begin position="567"/>
        <end position="573"/>
    </location>
</feature>
<feature type="sequence conflict" description="In Ref. 4; AAC82561." evidence="26" ref="4">
    <original>L</original>
    <variation>V</variation>
    <location>
        <position position="659"/>
    </location>
</feature>
<feature type="sequence conflict" description="In Ref. 4; AAC82561." evidence="26" ref="4">
    <original>L</original>
    <variation>F</variation>
    <location>
        <position position="701"/>
    </location>
</feature>
<feature type="sequence conflict" description="In Ref. 3; CAA48535." evidence="26" ref="3">
    <original>E</original>
    <variation>V</variation>
    <location>
        <position position="756"/>
    </location>
</feature>
<feature type="sequence conflict" description="In Ref. 4; AAC82561." evidence="26" ref="4">
    <original>C</original>
    <variation>R</variation>
    <location>
        <position position="884"/>
    </location>
</feature>
<feature type="sequence conflict" description="In Ref. 4; AAC82561." evidence="26" ref="4">
    <original>V</original>
    <variation>I</variation>
    <location>
        <position position="925"/>
    </location>
</feature>
<feature type="sequence conflict" description="In Ref. 3; CAA48535 and 4; AAC82561." evidence="26" ref="3 4">
    <original>R</original>
    <variation>Q</variation>
    <location>
        <position position="1012"/>
    </location>
</feature>
<feature type="sequence conflict" description="In Ref. 4; AAC82561." evidence="26" ref="4">
    <original>K</original>
    <variation>R</variation>
    <location>
        <position position="1116"/>
    </location>
</feature>
<feature type="sequence conflict" description="In Ref. 4; AAC82561." evidence="26" ref="4">
    <original>V</original>
    <variation>A</variation>
    <location>
        <position position="1155"/>
    </location>
</feature>
<feature type="sequence conflict" description="In Ref. 3; CAA48535." evidence="26" ref="3">
    <original>T</original>
    <variation>A</variation>
    <location>
        <position position="1206"/>
    </location>
</feature>
<feature type="sequence conflict" description="In Ref. 3; CAA48535." evidence="26" ref="3">
    <original>Q</original>
    <variation>K</variation>
    <location>
        <position position="1274"/>
    </location>
</feature>
<feature type="sequence conflict" description="In Ref. 3; CAA48535 and 4; AAC82561." evidence="26" ref="3 4">
    <original>V</original>
    <variation>A</variation>
    <location>
        <position position="1381"/>
    </location>
</feature>
<feature type="sequence conflict" description="In Ref. 4; AAC82561." evidence="26" ref="4">
    <original>R</original>
    <variation>K</variation>
    <location>
        <position position="1446"/>
    </location>
</feature>
<feature type="sequence conflict" description="In Ref. 4; AAC82561." evidence="26" ref="4">
    <original>I</original>
    <variation>V</variation>
    <location>
        <position position="1549"/>
    </location>
</feature>
<feature type="helix" evidence="37">
    <location>
        <begin position="2"/>
        <end position="15"/>
    </location>
</feature>
<feature type="helix" evidence="36">
    <location>
        <begin position="17"/>
        <end position="19"/>
    </location>
</feature>
<feature type="helix" evidence="37">
    <location>
        <begin position="23"/>
        <end position="35"/>
    </location>
</feature>
<feature type="strand" evidence="38">
    <location>
        <begin position="36"/>
        <end position="38"/>
    </location>
</feature>
<feature type="helix" evidence="37">
    <location>
        <begin position="42"/>
        <end position="46"/>
    </location>
</feature>
<feature type="helix" evidence="37">
    <location>
        <begin position="48"/>
        <end position="50"/>
    </location>
</feature>
<feature type="helix" evidence="37">
    <location>
        <begin position="51"/>
        <end position="65"/>
    </location>
</feature>
<feature type="helix" evidence="37">
    <location>
        <begin position="69"/>
        <end position="91"/>
    </location>
</feature>
<feature type="helix" evidence="39">
    <location>
        <begin position="1283"/>
        <end position="1292"/>
    </location>
</feature>
<feature type="helix" evidence="39">
    <location>
        <begin position="1296"/>
        <end position="1302"/>
    </location>
</feature>
<feature type="helix" evidence="39">
    <location>
        <begin position="1307"/>
        <end position="1314"/>
    </location>
</feature>
<feature type="helix" evidence="39">
    <location>
        <begin position="1318"/>
        <end position="1320"/>
    </location>
</feature>
<feature type="strand" evidence="39">
    <location>
        <begin position="1321"/>
        <end position="1324"/>
    </location>
</feature>
<feature type="strand" evidence="35">
    <location>
        <begin position="1339"/>
        <end position="1347"/>
    </location>
</feature>
<feature type="helix" evidence="35">
    <location>
        <begin position="1349"/>
        <end position="1351"/>
    </location>
</feature>
<feature type="strand" evidence="35">
    <location>
        <begin position="1356"/>
        <end position="1362"/>
    </location>
</feature>
<feature type="turn" evidence="35">
    <location>
        <begin position="1363"/>
        <end position="1365"/>
    </location>
</feature>
<feature type="strand" evidence="35">
    <location>
        <begin position="1368"/>
        <end position="1375"/>
    </location>
</feature>
<feature type="helix" evidence="35">
    <location>
        <begin position="1378"/>
        <end position="1392"/>
    </location>
</feature>
<feature type="strand" evidence="35">
    <location>
        <begin position="1396"/>
        <end position="1400"/>
    </location>
</feature>
<feature type="helix" evidence="35">
    <location>
        <begin position="1404"/>
        <end position="1407"/>
    </location>
</feature>
<feature type="helix" evidence="35">
    <location>
        <begin position="1409"/>
        <end position="1418"/>
    </location>
</feature>
<feature type="strand" evidence="35">
    <location>
        <begin position="1421"/>
        <end position="1424"/>
    </location>
</feature>
<feature type="helix" evidence="35">
    <location>
        <begin position="1430"/>
        <end position="1433"/>
    </location>
</feature>
<feature type="helix" evidence="35">
    <location>
        <begin position="1435"/>
        <end position="1453"/>
    </location>
</feature>
<feature type="strand" evidence="34">
    <location>
        <begin position="1457"/>
        <end position="1459"/>
    </location>
</feature>
<feature type="helix" evidence="35">
    <location>
        <begin position="1462"/>
        <end position="1464"/>
    </location>
</feature>
<feature type="helix" evidence="35">
    <location>
        <begin position="1465"/>
        <end position="1478"/>
    </location>
</feature>
<feature type="helix" evidence="35">
    <location>
        <begin position="1488"/>
        <end position="1493"/>
    </location>
</feature>
<feature type="strand" evidence="35">
    <location>
        <begin position="1503"/>
        <end position="1507"/>
    </location>
</feature>
<feature type="strand" evidence="35">
    <location>
        <begin position="1509"/>
        <end position="1511"/>
    </location>
</feature>
<feature type="strand" evidence="35">
    <location>
        <begin position="1513"/>
        <end position="1522"/>
    </location>
</feature>
<feature type="strand" evidence="35">
    <location>
        <begin position="1524"/>
        <end position="1531"/>
    </location>
</feature>
<feature type="turn" evidence="35">
    <location>
        <begin position="1532"/>
        <end position="1534"/>
    </location>
</feature>
<feature type="strand" evidence="35">
    <location>
        <begin position="1537"/>
        <end position="1541"/>
    </location>
</feature>
<feature type="helix" evidence="35">
    <location>
        <begin position="1542"/>
        <end position="1544"/>
    </location>
</feature>
<feature type="strand" evidence="35">
    <location>
        <begin position="1545"/>
        <end position="1547"/>
    </location>
</feature>
<protein>
    <recommendedName>
        <fullName>Gag-Pol polyprotein</fullName>
    </recommendedName>
    <component>
        <recommendedName>
            <fullName>Matrix protein p19</fullName>
        </recommendedName>
    </component>
    <component>
        <recommendedName>
            <fullName>p2A</fullName>
        </recommendedName>
    </component>
    <component>
        <recommendedName>
            <fullName>p2B</fullName>
        </recommendedName>
    </component>
    <component>
        <recommendedName>
            <fullName>p10</fullName>
        </recommendedName>
    </component>
    <component>
        <recommendedName>
            <fullName>Capsid protein p27, alternate cleaved 1</fullName>
        </recommendedName>
    </component>
    <component>
        <recommendedName>
            <fullName>Capsid protein p27, alternate cleaved 2</fullName>
        </recommendedName>
    </component>
    <component>
        <recommendedName>
            <fullName>Spacer peptide</fullName>
            <shortName>SP</shortName>
        </recommendedName>
        <alternativeName>
            <fullName>p3</fullName>
        </alternativeName>
    </component>
    <component>
        <recommendedName>
            <fullName>Nucleocapsid protein p12</fullName>
        </recommendedName>
        <alternativeName>
            <fullName evidence="4">NCp12</fullName>
        </alternativeName>
    </component>
    <component>
        <recommendedName>
            <fullName>Protease p15</fullName>
            <ecNumber evidence="6">3.4.23.-</ecNumber>
        </recommendedName>
    </component>
    <component>
        <recommendedName>
            <fullName>Reverse transcriptase beta-subunit</fullName>
            <shortName>RT-beta</shortName>
        </recommendedName>
    </component>
    <component>
        <recommendedName>
            <fullName>Reverse transcriptase alpha-subunit</fullName>
            <shortName>RT-alpha</shortName>
            <ecNumber evidence="7 15">2.7.7.49</ecNumber>
            <ecNumber evidence="7 15">2.7.7.7</ecNumber>
            <ecNumber evidence="8 15">3.1.26.4</ecNumber>
        </recommendedName>
    </component>
    <component>
        <recommendedName>
            <fullName>Integrase</fullName>
            <shortName>IN</shortName>
            <ecNumber evidence="14 27">2.7.7.-</ecNumber>
            <ecNumber evidence="14 27">3.1.-.-</ecNumber>
        </recommendedName>
        <alternativeName>
            <fullName>pp32</fullName>
        </alternativeName>
    </component>
    <component>
        <recommendedName>
            <fullName>p4</fullName>
        </recommendedName>
    </component>
</protein>
<accession>P03354</accession>
<accession>O92805</accession>
<accession>Q07462</accession>
<accession>Q64983</accession>
<reference key="1">
    <citation type="journal article" date="1983" name="Cell">
        <title>Nucleotide sequence of Rous sarcoma virus.</title>
        <authorList>
            <person name="Schwartz D."/>
            <person name="Tizard R."/>
            <person name="Gilbert W."/>
        </authorList>
    </citation>
    <scope>NUCLEOTIDE SEQUENCE [GENOMIC DNA]</scope>
</reference>
<reference key="2">
    <citation type="journal article" date="1985" name="Cell">
        <title>Rous sarcoma virus encodes a transcriptional activator.</title>
        <authorList>
            <person name="Broome S."/>
            <person name="Gilbert W."/>
        </authorList>
    </citation>
    <scope>NUCLEOTIDE SEQUENCE [GENOMIC RNA]</scope>
</reference>
<reference key="3">
    <citation type="journal article" date="1993" name="Mol. Biol. (Mosk.)">
        <title>Complete nucleotide sequence of Rous sarcoma virus variants adapted to duck cells.</title>
        <authorList>
            <person name="Kashuba V.I."/>
            <person name="Kavsan V.M."/>
            <person name="Ryndich A.V."/>
            <person name="Lazurkevich Z.V."/>
            <person name="Zubak S.V."/>
            <person name="Popov S.V."/>
            <person name="Dostalova V."/>
            <person name="Glozhanek I."/>
        </authorList>
    </citation>
    <scope>NUCLEOTIDE SEQUENCE [GENOMIC DNA]</scope>
</reference>
<reference key="4">
    <citation type="submission" date="1997-11" db="EMBL/GenBank/DDBJ databases">
        <authorList>
            <person name="Chappey C."/>
        </authorList>
    </citation>
    <scope>NUCLEOTIDE SEQUENCE [GENOMIC RNA]</scope>
</reference>
<reference key="5">
    <citation type="journal article" date="1996" name="J. Biol. Chem.">
        <title>Comparative studies on the substrate specificity of avian myeloblastosis virus proteinase and lentiviral proteinases.</title>
        <authorList>
            <person name="Tozser J."/>
            <person name="Bagossi P."/>
            <person name="Weber I.T."/>
            <person name="Copeland T.D."/>
            <person name="Oroszlan S."/>
        </authorList>
    </citation>
    <scope>PROTEOLYTIC PROCESSING (GAG-POL POLYPROTEIN)</scope>
</reference>
<reference key="6">
    <citation type="journal article" date="1998" name="J. Mol. Biol.">
        <title>Secondary structure and mutational analysis of the ribosomal frameshift signal of rous sarcoma virus.</title>
        <authorList>
            <person name="Marczinke B."/>
            <person name="Fisher R."/>
            <person name="Vidakovic M."/>
            <person name="Bloys A.J."/>
            <person name="Brierley I."/>
        </authorList>
    </citation>
    <scope>RIBOSOMAL FRAMESHIFTING (GAG-POL POLYPROTEIN)</scope>
</reference>
<reference key="7">
    <citation type="journal article" date="2000" name="J. Virol.">
        <title>Asymmetric subunit organization of heterodimeric Rous sarcoma virus reverse transcriptase alphabeta: localization of the polymerase and RNase H active sites in the alpha subunit.</title>
        <authorList>
            <person name="Werner S."/>
            <person name="Woehrl B.M."/>
        </authorList>
    </citation>
    <scope>SUBUNIT (REVERSE TRANSCRIPTASE ALPHA-SUBUNIT)</scope>
    <scope>SUBUNIT (REVERSE TRANSCRIPTASE BETA-SUBUNIT)</scope>
    <scope>ACTIVE SITE (REVERSE TRANSCRIPTASE ALPHA-SUBUNIT)</scope>
    <scope>CATALYTIC ACTIVITY (REVERSE TRANSCRIPTASE ALPHA-SUBUNIT)</scope>
    <scope>MUTAGENESIS OF ASP-890 AND ASP-1213</scope>
</reference>
<reference key="8">
    <citation type="journal article" date="2001" name="J. Biol. Chem.">
        <title>Nucleophile selection for the endonuclease activities of human, ovine, and avian retroviral integrases.</title>
        <authorList>
            <person name="Skinner L.M."/>
            <person name="Sudol M."/>
            <person name="Harper A.L."/>
            <person name="Katzman M."/>
        </authorList>
    </citation>
    <scope>FUNCTION (INTEGRASE)</scope>
    <scope>COFACTOR (INTEGRASE)</scope>
</reference>
<reference key="9">
    <citation type="journal article" date="2004" name="J. Biol. Chem.">
        <title>Narrow substrate specificity and sensitivity toward ligand-binding site mutations of human T-cell Leukemia virus type 1 protease.</title>
        <authorList>
            <person name="Kadas J."/>
            <person name="Weber I.T."/>
            <person name="Bagossi P."/>
            <person name="Miklossy G."/>
            <person name="Boross P."/>
            <person name="Oroszlan S."/>
            <person name="Toezser J."/>
        </authorList>
    </citation>
    <scope>PROTEOLYTIC CLEAVAGE (GAG-POL POLYPROTEIN)</scope>
</reference>
<reference key="10">
    <citation type="journal article" date="2010" name="J. Virol.">
        <title>An LYPSL late domain in the gag protein contributes to the efficient release and replication of Rous sarcoma virus.</title>
        <authorList>
            <person name="Dilley K.A."/>
            <person name="Gregory D."/>
            <person name="Johnson M.C."/>
            <person name="Vogt V.M."/>
        </authorList>
    </citation>
    <scope>DOMAIN (GAG-POL POLYPROTEIN)</scope>
    <scope>MUTAGENESIS OF PRO-172 AND 180-LEU--LEU-184</scope>
</reference>
<reference key="11">
    <citation type="journal article" date="2017" name="Curr. Opin. Struct. Biol.">
        <title>Retroviral intasomes arising.</title>
        <authorList>
            <person name="Engelman A.N."/>
            <person name="Cherepanov P."/>
        </authorList>
    </citation>
    <scope>REVIEW (INTEGRASE)</scope>
</reference>
<reference key="12">
    <citation type="journal article" date="2017" name="J. Biol. Chem.">
        <title>A C-terminal 'tail' region in the Rous sarcoma virus integrase provides high plasticity of functional integrase oligomerization during intasome assembly.</title>
        <authorList>
            <person name="Pandey K.K."/>
            <person name="Bera S."/>
            <person name="Shi K."/>
            <person name="Aihara H."/>
            <person name="Grandgenett D.P."/>
        </authorList>
    </citation>
    <scope>SUBUNIT (INTEGRASE)</scope>
    <source>
        <strain>Prague A</strain>
    </source>
</reference>
<reference key="13">
    <citation type="journal article" date="1998" name="Biochemistry">
        <title>Structural basis for specificity of retroviral proteases.</title>
        <authorList>
            <person name="Wu J."/>
            <person name="Adomat J.M."/>
            <person name="Ridky T.W."/>
            <person name="Louis J.M."/>
            <person name="Leis J."/>
            <person name="Harrison R.W."/>
            <person name="Weber I.T."/>
        </authorList>
    </citation>
    <scope>X-RAY CRYSTALLOGRAPHY (2.4 ANGSTROMS) OF 578-701 OF MUTANT SER-615; ILE-619; ILE-621; MET-650; ALA-677; VAL-681; ARG-682; GLY-683; SER-684 WITH INHIBITOR</scope>
    <source>
        <strain>S9 variant</strain>
    </source>
</reference>
<reference evidence="28 29" key="14">
    <citation type="journal article" date="2000" name="J. Mol. Biol.">
        <title>Crystal structure of an active two-domain derivative of Rous sarcoma virus integrase.</title>
        <authorList>
            <person name="Yang Z.N."/>
            <person name="Mueser T.C."/>
            <person name="Bushman F.D."/>
            <person name="Hyde C.C."/>
        </authorList>
    </citation>
    <scope>X-RAY CRYSTALLOGRAPHY (2.53 ANGSTROMS) OF 1329-1566</scope>
    <scope>CATALYTIC ACTIVITY (INTEGRASE)</scope>
    <scope>ACTIVE SITE (INTEGRASE)</scope>
</reference>
<reference evidence="30" key="15">
    <citation type="journal article" date="2012" name="J. Mol. Biol.">
        <title>A structural model for the generation of continuous curvature on the surface of a retroviral capsid.</title>
        <authorList>
            <person name="Bailey G.D."/>
            <person name="Hyun J.K."/>
            <person name="Mitra A.K."/>
            <person name="Kingston R.L."/>
        </authorList>
    </citation>
    <scope>X-RAY CRYSTALLOGRAPHY (4.10 ANGSTROMS) OF 240-465</scope>
</reference>
<reference evidence="31 32" key="16">
    <citation type="journal article" date="2013" name="PLoS ONE">
        <title>A possible role for the asymmetric C-terminal domain dimer of Rous sarcoma virus integrase in viral DNA binding.</title>
        <authorList>
            <person name="Shi K."/>
            <person name="Pandey K.K."/>
            <person name="Bera S."/>
            <person name="Vora A.C."/>
            <person name="Grandgenett D.P."/>
            <person name="Aihara H."/>
        </authorList>
    </citation>
    <scope>X-RAY CRYSTALLOGRAPHY (1.86 ANGSTROMS) OF 1329-1550</scope>
    <scope>SUBUNIT (INTEGRASE)</scope>
</reference>
<reference evidence="33" key="17">
    <citation type="journal article" date="2016" name="Nature">
        <title>Crystal structure of the Rous sarcoma virus intasome.</title>
        <authorList>
            <person name="Yin Z."/>
            <person name="Shi K."/>
            <person name="Banerjee S."/>
            <person name="Pandey K.K."/>
            <person name="Bera S."/>
            <person name="Grandgenett D.P."/>
            <person name="Aihara H."/>
        </authorList>
    </citation>
    <scope>X-RAY CRYSTALLOGRAPHY (3.80 ANGSTROMS) OF 1281-1550 IN COMPLEX WITH ZINC</scope>
    <scope>SUBUNIT (INTEGRASE)</scope>
</reference>
<organism>
    <name type="scientific">Rous sarcoma virus subgroup C (strain Prague)</name>
    <name type="common">RSV-Pr-C</name>
    <dbReference type="NCBI Taxonomy" id="11888"/>
    <lineage>
        <taxon>Viruses</taxon>
        <taxon>Riboviria</taxon>
        <taxon>Pararnavirae</taxon>
        <taxon>Artverviricota</taxon>
        <taxon>Revtraviricetes</taxon>
        <taxon>Ortervirales</taxon>
        <taxon>Retroviridae</taxon>
        <taxon>Orthoretrovirinae</taxon>
        <taxon>Alpharetrovirus</taxon>
        <taxon>Rous sarcoma virus</taxon>
    </lineage>
</organism>
<proteinExistence type="evidence at protein level"/>
<keyword id="KW-0002">3D-structure</keyword>
<keyword id="KW-0064">Aspartyl protease</keyword>
<keyword id="KW-0167">Capsid protein</keyword>
<keyword id="KW-0229">DNA integration</keyword>
<keyword id="KW-0233">DNA recombination</keyword>
<keyword id="KW-0238">DNA-binding</keyword>
<keyword id="KW-0239">DNA-directed DNA polymerase</keyword>
<keyword id="KW-0255">Endonuclease</keyword>
<keyword id="KW-0378">Hydrolase</keyword>
<keyword id="KW-0460">Magnesium</keyword>
<keyword id="KW-0479">Metal-binding</keyword>
<keyword id="KW-0511">Multifunctional enzyme</keyword>
<keyword id="KW-0540">Nuclease</keyword>
<keyword id="KW-0548">Nucleotidyltransferase</keyword>
<keyword id="KW-0645">Protease</keyword>
<keyword id="KW-0677">Repeat</keyword>
<keyword id="KW-0688">Ribosomal frameshifting</keyword>
<keyword id="KW-0694">RNA-binding</keyword>
<keyword id="KW-0695">RNA-directed DNA polymerase</keyword>
<keyword id="KW-0808">Transferase</keyword>
<keyword id="KW-1179">Viral genome integration</keyword>
<keyword id="KW-0543">Viral nucleoprotein</keyword>
<keyword id="KW-0946">Virion</keyword>
<keyword id="KW-1160">Virus entry into host cell</keyword>
<keyword id="KW-0862">Zinc</keyword>
<keyword id="KW-0863">Zinc-finger</keyword>
<comment type="function">
    <text evidence="3">Capsid protein p27: Self-associates to form the irregular polyhedron core composed of hexamers and pentamers, that encapsulates the genomic RNA-nucleocapsid complex. Assembles as a tube in vitro. Binds to inositol hexakisphosphate (IP6), which allows the assembly of the polyhedral capsid.</text>
</comment>
<comment type="function">
    <molecule>Spacer peptide</molecule>
    <text evidence="3">Plays a role in the oligomerization of the Gag polyprotein and in the stabilization of the immature particle. Essential layering element during tube assembly. Allows the cooperative binging of Gag to the host plasma membrane.</text>
</comment>
<comment type="function">
    <molecule>Nucleocapsid protein p12</molecule>
    <text evidence="3 4">Binds strongly to viral nucleic acids and promotes their packaging (By similarity). Plays a role in the maturation-stabilization of the viral dimeric RNA via highly structured zinc-binding motifs (By similarity).</text>
</comment>
<comment type="function">
    <molecule>Protease p15</molecule>
    <text evidence="6">The aspartyl protease mediates proteolytic cleavages of Gag and Gag-Pol polyproteins during or shortly after the release of the virion from the plasma membrane. Cleavages take place as an ordered, step-wise cascade to yield mature proteins. This process is called maturation. Displays maximal activity during the budding process just prior to particle release from the cell.</text>
</comment>
<comment type="function">
    <molecule>Integrase</molecule>
    <text evidence="16">Catalyzes viral DNA integration into the host chromosome, by performing a series of DNA cutting and joining reactions. This recombination event is an essential step in the viral replication cycle. Has a strong preference for using the 3'-OH at the viral DNA end as a nucleophile.</text>
</comment>
<comment type="catalytic activity">
    <molecule>Reverse transcriptase alpha-subunit</molecule>
    <reaction evidence="7">
        <text>DNA(n) + a 2'-deoxyribonucleoside 5'-triphosphate = DNA(n+1) + diphosphate</text>
        <dbReference type="Rhea" id="RHEA:22508"/>
        <dbReference type="Rhea" id="RHEA-COMP:17339"/>
        <dbReference type="Rhea" id="RHEA-COMP:17340"/>
        <dbReference type="ChEBI" id="CHEBI:33019"/>
        <dbReference type="ChEBI" id="CHEBI:61560"/>
        <dbReference type="ChEBI" id="CHEBI:173112"/>
        <dbReference type="EC" id="2.7.7.49"/>
    </reaction>
</comment>
<comment type="catalytic activity">
    <molecule>Reverse transcriptase alpha-subunit</molecule>
    <reaction evidence="7">
        <text>DNA(n) + a 2'-deoxyribonucleoside 5'-triphosphate = DNA(n+1) + diphosphate</text>
        <dbReference type="Rhea" id="RHEA:22508"/>
        <dbReference type="Rhea" id="RHEA-COMP:17339"/>
        <dbReference type="Rhea" id="RHEA-COMP:17340"/>
        <dbReference type="ChEBI" id="CHEBI:33019"/>
        <dbReference type="ChEBI" id="CHEBI:61560"/>
        <dbReference type="ChEBI" id="CHEBI:173112"/>
        <dbReference type="EC" id="2.7.7.7"/>
    </reaction>
</comment>
<comment type="catalytic activity">
    <molecule>Reverse transcriptase alpha-subunit</molecule>
    <reaction evidence="8">
        <text>Endonucleolytic cleavage to 5'-phosphomonoester.</text>
        <dbReference type="EC" id="3.1.26.4"/>
    </reaction>
</comment>
<comment type="cofactor">
    <molecule>Reverse transcriptase alpha-subunit</molecule>
    <cofactor evidence="1">
        <name>Mg(2+)</name>
        <dbReference type="ChEBI" id="CHEBI:18420"/>
    </cofactor>
    <text evidence="7">The RT polymerase active site binds 2 magnesium ions.</text>
</comment>
<comment type="cofactor">
    <molecule>Reverse transcriptase alpha-subunit</molecule>
    <cofactor evidence="1">
        <name>Mg(2+)</name>
        <dbReference type="ChEBI" id="CHEBI:18420"/>
    </cofactor>
    <text evidence="1">Binds 2 magnesium ions for ribonuclease H (RNase H) activity. Substrate-binding is a precondition for magnesium binding.</text>
</comment>
<comment type="cofactor">
    <molecule>Integrase</molecule>
    <cofactor evidence="16">
        <name>Mg(2+)</name>
        <dbReference type="ChEBI" id="CHEBI:18420"/>
    </cofactor>
    <cofactor evidence="16">
        <name>Mn(2+)</name>
        <dbReference type="ChEBI" id="CHEBI:29035"/>
    </cofactor>
    <text evidence="2">Binds 8 Mg(2+) ions per integrase homotetramer. Zn(2+) can also be a cofactor for the nicking activity, but not for the polynucleotidyltransferase activity.</text>
</comment>
<comment type="subunit">
    <molecule>Protease p15</molecule>
    <text evidence="3">Active as a homodimer.</text>
</comment>
<comment type="subunit">
    <molecule>Capsid protein p27, alternate cleaved 1</molecule>
    <text evidence="3">Homodimer. Homomultimer. Homohexamer.</text>
</comment>
<comment type="subunit">
    <molecule>Capsid protein p27, alternate cleaved 2</molecule>
    <text evidence="3">Homodimer. Homomultimer. Homohexamer.</text>
</comment>
<comment type="subunit">
    <molecule>Integrase</molecule>
    <text evidence="19 20 21 25">Homodimer; further associates as a homooctamer.</text>
</comment>
<comment type="subunit">
    <molecule>Reverse transcriptase beta-subunit</molecule>
    <text evidence="15">Heterodimer of alpha and beta subunits. Three forms of RT exist: alpha-alpha (alpha-Pol), beta-beta (beta-Pol), and alpha-beta, with the major form being the heterodimer. Both the polymerase and RNase H active sites are located in the alpha subunit of heterodimeric RT alpha-beta.</text>
</comment>
<comment type="subunit">
    <molecule>Reverse transcriptase alpha-subunit</molecule>
    <text evidence="15">Heterodimer of alpha and beta subunits. Three forms of RT exist: alpha-alpha (alpha-Pol), beta-beta (beta-Pol), and alpha-beta, with the major form being the heterodimer. Both the polymerase and RNase H active sites are located in the alpha subunit of heterodimeric RT alpha-beta.</text>
</comment>
<comment type="subcellular location">
    <molecule>Matrix protein p19</molecule>
    <subcellularLocation>
        <location evidence="26">Virion</location>
    </subcellularLocation>
</comment>
<comment type="subcellular location">
    <molecule>Capsid protein p27, alternate cleaved 1</molecule>
    <subcellularLocation>
        <location evidence="26">Virion</location>
    </subcellularLocation>
</comment>
<comment type="subcellular location">
    <molecule>Capsid protein p27, alternate cleaved 2</molecule>
    <subcellularLocation>
        <location evidence="26">Virion</location>
    </subcellularLocation>
</comment>
<comment type="subcellular location">
    <molecule>Nucleocapsid protein p12</molecule>
    <subcellularLocation>
        <location evidence="26">Virion</location>
    </subcellularLocation>
</comment>
<comment type="alternative products">
    <event type="ribosomal frameshifting"/>
    <isoform>
        <id>P03354-1</id>
        <name>Gag-Pol polyprotein</name>
        <sequence type="displayed"/>
    </isoform>
    <isoform>
        <id>P03322-1</id>
        <name>Gag polyprotein</name>
        <sequence type="external"/>
    </isoform>
    <text evidence="23">Translation results in the formation of the Gag polyprotein. Ribosomal frameshifting at the gag/pol genes boundary produces the Gag-Pol polyprotein.</text>
</comment>
<comment type="domain">
    <molecule>Gag-Pol polyprotein</molecule>
    <text evidence="18">Late-budding domains (L domains) are short sequence motifs essential for viral particle release. They can occur individually or in close proximity within structural proteins. They interacts with sorting cellular proteins of the multivesicular body (MVB) pathway. Most of these proteins are class E vacuolar protein sorting factors belonging to ESCRT-I, ESCRT-II or ESCRT-III complexes. P2B contains two L domain: a PPXY motif which probably binds to the WW domains of HECT (homologous to E6-AP C-terminus) E3 ubiquitin ligases and a LYPX(n)L domain which is known to bind the Alix adaptator protein.</text>
</comment>
<comment type="domain">
    <molecule>Integrase</molecule>
    <text evidence="2">The core domain contains the D-x(n)-D-x(35)-E motif, named for the phylogenetically conserved glutamic acid and aspartic acid residues and the invariant 35 amino acid spacing between the second and third acidic residues. Each acidic residue of the D,D(35)E motif is independently essential for the 3'-processing and strand transfer activities of purified integrase protein.</text>
</comment>
<comment type="domain">
    <molecule>Gag-Pol polyprotein</molecule>
    <text evidence="3">Contains a nuclear export signal in p10 and a nucleolar localization signal in nucleocapsid protein p12.</text>
</comment>
<comment type="domain">
    <text evidence="3">Capsid protein p27: Proton-driven dimerization of the C-terminus facilitates capsid assembly.</text>
</comment>
<comment type="PTM">
    <molecule>Isoform Gag-Pol polyprotein</molecule>
    <text evidence="17 22">Specific enzymatic cleavages in vivo yield mature proteins.</text>
</comment>
<comment type="PTM">
    <text evidence="3">Capsid protein p27: The cleavage at the C-terminus is slowly trimmed by the viral protease, sometimes being cut internally thereby generating the short version of the capsid protein and a capsid protein C-terminally extended by 3 amino acids in a ratio of 2:1.</text>
</comment>
<comment type="miscellaneous">
    <text evidence="7">Reverse transcriptase: Error-prone enzyme that lacks a proof-reading function. High mutations rate is a direct consequence of this characteristic. RT also displays frequent template switching leading to high recombination rate. Recombination mostly occurs between homologous regions of the two copackaged RNA genomes. If these two RNA molecules derive from different viral strains, reverse transcription will give rise to highly recombinated proviral DNAs.</text>
</comment>
<comment type="miscellaneous">
    <molecule>Isoform Gag-Pol polyprotein</molecule>
    <text evidence="23">Produced by -1 ribosomal frameshifting.</text>
</comment>
<comment type="sequence caution" evidence="26">
    <conflict type="erroneous gene model prediction">
        <sequence resource="EMBL-CDS" id="AAB59933"/>
    </conflict>
</comment>
<gene>
    <name type="primary">gag-pol</name>
</gene>
<dbReference type="EC" id="3.4.23.-" evidence="6"/>
<dbReference type="EC" id="2.7.7.49" evidence="7 15"/>
<dbReference type="EC" id="2.7.7.7" evidence="7 15"/>
<dbReference type="EC" id="3.1.26.4" evidence="8 15"/>
<dbReference type="EC" id="2.7.7.-" evidence="14 27"/>
<dbReference type="EC" id="3.1.-.-" evidence="14 27"/>
<dbReference type="EMBL" id="V01197">
    <property type="status" value="NOT_ANNOTATED_CDS"/>
    <property type="molecule type" value="Genomic_DNA"/>
</dbReference>
<dbReference type="EMBL" id="J02342">
    <property type="protein sequence ID" value="AAB59933.1"/>
    <property type="status" value="ALT_SEQ"/>
    <property type="molecule type" value="Genomic_RNA"/>
</dbReference>
<dbReference type="EMBL" id="X68524">
    <property type="protein sequence ID" value="CAA48535.1"/>
    <property type="status" value="ALT_SEQ"/>
    <property type="molecule type" value="Genomic_DNA"/>
</dbReference>
<dbReference type="EMBL" id="AF033808">
    <property type="protein sequence ID" value="AAC82561.1"/>
    <property type="molecule type" value="Genomic_RNA"/>
</dbReference>
<dbReference type="PIR" id="A03955">
    <property type="entry name" value="GNFV1R"/>
</dbReference>
<dbReference type="RefSeq" id="NP_056886.1">
    <property type="nucleotide sequence ID" value="NC_001407.1"/>
</dbReference>
<dbReference type="PDB" id="1BAI">
    <property type="method" value="X-ray"/>
    <property type="resolution" value="2.40 A"/>
    <property type="chains" value="A/B=578-701"/>
</dbReference>
<dbReference type="PDB" id="1C0M">
    <property type="method" value="X-ray"/>
    <property type="resolution" value="2.53 A"/>
    <property type="chains" value="A/B/C/D=1329-1566"/>
</dbReference>
<dbReference type="PDB" id="1C1A">
    <property type="method" value="X-ray"/>
    <property type="resolution" value="3.10 A"/>
    <property type="chains" value="A/B=1329-1566"/>
</dbReference>
<dbReference type="PDB" id="3TIR">
    <property type="method" value="X-ray"/>
    <property type="resolution" value="4.10 A"/>
    <property type="chains" value="A=240-465"/>
</dbReference>
<dbReference type="PDB" id="4FW1">
    <property type="method" value="X-ray"/>
    <property type="resolution" value="1.86 A"/>
    <property type="chains" value="A/B=1329-1550"/>
</dbReference>
<dbReference type="PDB" id="4FW2">
    <property type="method" value="X-ray"/>
    <property type="resolution" value="2.65 A"/>
    <property type="chains" value="A/B=1281-1550"/>
</dbReference>
<dbReference type="PDB" id="5EJK">
    <property type="method" value="X-ray"/>
    <property type="resolution" value="3.80 A"/>
    <property type="chains" value="A/B/C/D/E/F/G/H=1281-1550"/>
</dbReference>
<dbReference type="PDB" id="5KZ9">
    <property type="method" value="X-ray"/>
    <property type="resolution" value="2.85 A"/>
    <property type="chains" value="A=1-155"/>
</dbReference>
<dbReference type="PDB" id="5KZA">
    <property type="method" value="X-ray"/>
    <property type="resolution" value="1.86 A"/>
    <property type="chains" value="A=2-102"/>
</dbReference>
<dbReference type="PDB" id="5KZB">
    <property type="method" value="X-ray"/>
    <property type="resolution" value="3.20 A"/>
    <property type="chains" value="A=2-102"/>
</dbReference>
<dbReference type="PDB" id="6CCJ">
    <property type="method" value="NMR"/>
    <property type="chains" value="A=2-87"/>
</dbReference>
<dbReference type="PDB" id="6CE5">
    <property type="method" value="NMR"/>
    <property type="chains" value="A=2-87"/>
</dbReference>
<dbReference type="PDB" id="6CUS">
    <property type="method" value="NMR"/>
    <property type="chains" value="A=2-87"/>
</dbReference>
<dbReference type="PDB" id="6CV8">
    <property type="method" value="NMR"/>
    <property type="chains" value="A=2-87"/>
</dbReference>
<dbReference type="PDB" id="6CW4">
    <property type="method" value="NMR"/>
    <property type="chains" value="A=2-87"/>
</dbReference>
<dbReference type="PDB" id="7JN3">
    <property type="method" value="EM"/>
    <property type="resolution" value="3.21 A"/>
    <property type="chains" value="A/B/C/D/E/F/G/H=1281-1558"/>
</dbReference>
<dbReference type="PDB" id="7KU7">
    <property type="method" value="EM"/>
    <property type="resolution" value="3.40 A"/>
    <property type="chains" value="A/B/C/D/E/F/G/H=1281-1558"/>
</dbReference>
<dbReference type="PDB" id="7KUI">
    <property type="method" value="EM"/>
    <property type="resolution" value="3.40 A"/>
    <property type="chains" value="A/B/C/D/E/F/G/H=1281-1558"/>
</dbReference>
<dbReference type="PDB" id="8E14">
    <property type="method" value="EM"/>
    <property type="resolution" value="3.36 A"/>
    <property type="chains" value="A/B/C/D/E/F/G/H=1281-1558"/>
</dbReference>
<dbReference type="PDBsum" id="1BAI"/>
<dbReference type="PDBsum" id="1C0M"/>
<dbReference type="PDBsum" id="1C1A"/>
<dbReference type="PDBsum" id="3TIR"/>
<dbReference type="PDBsum" id="4FW1"/>
<dbReference type="PDBsum" id="4FW2"/>
<dbReference type="PDBsum" id="5EJK"/>
<dbReference type="PDBsum" id="5KZ9"/>
<dbReference type="PDBsum" id="5KZA"/>
<dbReference type="PDBsum" id="5KZB"/>
<dbReference type="PDBsum" id="6CCJ"/>
<dbReference type="PDBsum" id="6CE5"/>
<dbReference type="PDBsum" id="6CUS"/>
<dbReference type="PDBsum" id="6CV8"/>
<dbReference type="PDBsum" id="6CW4"/>
<dbReference type="PDBsum" id="7JN3"/>
<dbReference type="PDBsum" id="7KU7"/>
<dbReference type="PDBsum" id="7KUI"/>
<dbReference type="PDBsum" id="8E14"/>
<dbReference type="BMRB" id="P03354"/>
<dbReference type="EMDB" id="EMD-22400"/>
<dbReference type="EMDB" id="EMD-23035"/>
<dbReference type="EMDB" id="EMD-27823"/>
<dbReference type="SMR" id="P03354"/>
<dbReference type="BindingDB" id="P03354"/>
<dbReference type="ChEMBL" id="CHEMBL2750"/>
<dbReference type="MEROPS" id="A02.015"/>
<dbReference type="KEGG" id="vg:2193432"/>
<dbReference type="EvolutionaryTrace" id="P03354"/>
<dbReference type="Proteomes" id="UP000007183">
    <property type="component" value="Segment"/>
</dbReference>
<dbReference type="Proteomes" id="UP000137552">
    <property type="component" value="Segment"/>
</dbReference>
<dbReference type="GO" id="GO:0019013">
    <property type="term" value="C:viral nucleocapsid"/>
    <property type="evidence" value="ECO:0007669"/>
    <property type="project" value="UniProtKB-KW"/>
</dbReference>
<dbReference type="GO" id="GO:0004190">
    <property type="term" value="F:aspartic-type endopeptidase activity"/>
    <property type="evidence" value="ECO:0007669"/>
    <property type="project" value="UniProtKB-KW"/>
</dbReference>
<dbReference type="GO" id="GO:0003677">
    <property type="term" value="F:DNA binding"/>
    <property type="evidence" value="ECO:0007669"/>
    <property type="project" value="UniProtKB-KW"/>
</dbReference>
<dbReference type="GO" id="GO:0003887">
    <property type="term" value="F:DNA-directed DNA polymerase activity"/>
    <property type="evidence" value="ECO:0007669"/>
    <property type="project" value="UniProtKB-KW"/>
</dbReference>
<dbReference type="GO" id="GO:0035613">
    <property type="term" value="F:RNA stem-loop binding"/>
    <property type="evidence" value="ECO:0007669"/>
    <property type="project" value="TreeGrafter"/>
</dbReference>
<dbReference type="GO" id="GO:0003964">
    <property type="term" value="F:RNA-directed DNA polymerase activity"/>
    <property type="evidence" value="ECO:0007669"/>
    <property type="project" value="UniProtKB-KW"/>
</dbReference>
<dbReference type="GO" id="GO:0004523">
    <property type="term" value="F:RNA-DNA hybrid ribonuclease activity"/>
    <property type="evidence" value="ECO:0007669"/>
    <property type="project" value="UniProtKB-EC"/>
</dbReference>
<dbReference type="GO" id="GO:0008270">
    <property type="term" value="F:zinc ion binding"/>
    <property type="evidence" value="ECO:0007669"/>
    <property type="project" value="UniProtKB-KW"/>
</dbReference>
<dbReference type="GO" id="GO:0015074">
    <property type="term" value="P:DNA integration"/>
    <property type="evidence" value="ECO:0007669"/>
    <property type="project" value="UniProtKB-KW"/>
</dbReference>
<dbReference type="GO" id="GO:0006310">
    <property type="term" value="P:DNA recombination"/>
    <property type="evidence" value="ECO:0007669"/>
    <property type="project" value="UniProtKB-KW"/>
</dbReference>
<dbReference type="GO" id="GO:0075713">
    <property type="term" value="P:establishment of integrated proviral latency"/>
    <property type="evidence" value="ECO:0007669"/>
    <property type="project" value="UniProtKB-KW"/>
</dbReference>
<dbReference type="GO" id="GO:0006508">
    <property type="term" value="P:proteolysis"/>
    <property type="evidence" value="ECO:0007669"/>
    <property type="project" value="UniProtKB-KW"/>
</dbReference>
<dbReference type="GO" id="GO:0046718">
    <property type="term" value="P:symbiont entry into host cell"/>
    <property type="evidence" value="ECO:0007669"/>
    <property type="project" value="UniProtKB-KW"/>
</dbReference>
<dbReference type="GO" id="GO:0044826">
    <property type="term" value="P:viral genome integration into host DNA"/>
    <property type="evidence" value="ECO:0007669"/>
    <property type="project" value="UniProtKB-KW"/>
</dbReference>
<dbReference type="GO" id="GO:0075523">
    <property type="term" value="P:viral translational frameshifting"/>
    <property type="evidence" value="ECO:0007669"/>
    <property type="project" value="UniProtKB-KW"/>
</dbReference>
<dbReference type="CDD" id="cd05482">
    <property type="entry name" value="HIV_retropepsin_like"/>
    <property type="match status" value="1"/>
</dbReference>
<dbReference type="CDD" id="cd01645">
    <property type="entry name" value="RT_Rtv"/>
    <property type="match status" value="1"/>
</dbReference>
<dbReference type="FunFam" id="1.10.375.10:FF:000003">
    <property type="entry name" value="Gag polyprotein"/>
    <property type="match status" value="1"/>
</dbReference>
<dbReference type="FunFam" id="1.10.10.200:FF:000010">
    <property type="entry name" value="Gag-Pol polyprotein"/>
    <property type="match status" value="1"/>
</dbReference>
<dbReference type="FunFam" id="3.30.420.10:FF:000184">
    <property type="entry name" value="Gag-Pol polyprotein"/>
    <property type="match status" value="1"/>
</dbReference>
<dbReference type="Gene3D" id="1.10.10.200">
    <property type="match status" value="1"/>
</dbReference>
<dbReference type="Gene3D" id="1.10.1200.30">
    <property type="match status" value="1"/>
</dbReference>
<dbReference type="Gene3D" id="3.30.70.270">
    <property type="match status" value="2"/>
</dbReference>
<dbReference type="Gene3D" id="2.40.70.10">
    <property type="entry name" value="Acid Proteases"/>
    <property type="match status" value="1"/>
</dbReference>
<dbReference type="Gene3D" id="3.10.10.10">
    <property type="entry name" value="HIV Type 1 Reverse Transcriptase, subunit A, domain 1"/>
    <property type="match status" value="1"/>
</dbReference>
<dbReference type="Gene3D" id="1.10.375.10">
    <property type="entry name" value="Human Immunodeficiency Virus Type 1 Capsid Protein"/>
    <property type="match status" value="1"/>
</dbReference>
<dbReference type="Gene3D" id="1.10.150.90">
    <property type="entry name" value="Immunodeficiency lentiviruses, gag gene matrix protein p17"/>
    <property type="match status" value="1"/>
</dbReference>
<dbReference type="Gene3D" id="2.30.30.10">
    <property type="entry name" value="Integrase, C-terminal domain superfamily, retroviral"/>
    <property type="match status" value="1"/>
</dbReference>
<dbReference type="Gene3D" id="3.30.420.10">
    <property type="entry name" value="Ribonuclease H-like superfamily/Ribonuclease H"/>
    <property type="match status" value="2"/>
</dbReference>
<dbReference type="Gene3D" id="4.10.60.10">
    <property type="entry name" value="Zinc finger, CCHC-type"/>
    <property type="match status" value="1"/>
</dbReference>
<dbReference type="InterPro" id="IPR001969">
    <property type="entry name" value="Aspartic_peptidase_AS"/>
</dbReference>
<dbReference type="InterPro" id="IPR043502">
    <property type="entry name" value="DNA/RNA_pol_sf"/>
</dbReference>
<dbReference type="InterPro" id="IPR004028">
    <property type="entry name" value="Gag_M"/>
</dbReference>
<dbReference type="InterPro" id="IPR017856">
    <property type="entry name" value="Integrase-like_N"/>
</dbReference>
<dbReference type="InterPro" id="IPR036862">
    <property type="entry name" value="Integrase_C_dom_sf_retrovir"/>
</dbReference>
<dbReference type="InterPro" id="IPR001037">
    <property type="entry name" value="Integrase_C_retrovir"/>
</dbReference>
<dbReference type="InterPro" id="IPR001584">
    <property type="entry name" value="Integrase_cat-core"/>
</dbReference>
<dbReference type="InterPro" id="IPR003308">
    <property type="entry name" value="Integrase_Zn-bd_dom_N"/>
</dbReference>
<dbReference type="InterPro" id="IPR012344">
    <property type="entry name" value="Matrix_HIV/RSV_N"/>
</dbReference>
<dbReference type="InterPro" id="IPR001995">
    <property type="entry name" value="Peptidase_A2_cat"/>
</dbReference>
<dbReference type="InterPro" id="IPR021109">
    <property type="entry name" value="Peptidase_aspartic_dom_sf"/>
</dbReference>
<dbReference type="InterPro" id="IPR034170">
    <property type="entry name" value="Retropepsin-like_cat_dom"/>
</dbReference>
<dbReference type="InterPro" id="IPR018061">
    <property type="entry name" value="Retropepsins"/>
</dbReference>
<dbReference type="InterPro" id="IPR008916">
    <property type="entry name" value="Retrov_capsid_C"/>
</dbReference>
<dbReference type="InterPro" id="IPR008919">
    <property type="entry name" value="Retrov_capsid_N"/>
</dbReference>
<dbReference type="InterPro" id="IPR010999">
    <property type="entry name" value="Retrovr_matrix"/>
</dbReference>
<dbReference type="InterPro" id="IPR043128">
    <property type="entry name" value="Rev_trsase/Diguanyl_cyclase"/>
</dbReference>
<dbReference type="InterPro" id="IPR012337">
    <property type="entry name" value="RNaseH-like_sf"/>
</dbReference>
<dbReference type="InterPro" id="IPR002156">
    <property type="entry name" value="RNaseH_domain"/>
</dbReference>
<dbReference type="InterPro" id="IPR036397">
    <property type="entry name" value="RNaseH_sf"/>
</dbReference>
<dbReference type="InterPro" id="IPR000477">
    <property type="entry name" value="RT_dom"/>
</dbReference>
<dbReference type="InterPro" id="IPR010661">
    <property type="entry name" value="RVT_thumb"/>
</dbReference>
<dbReference type="InterPro" id="IPR001878">
    <property type="entry name" value="Znf_CCHC"/>
</dbReference>
<dbReference type="InterPro" id="IPR036875">
    <property type="entry name" value="Znf_CCHC_sf"/>
</dbReference>
<dbReference type="PANTHER" id="PTHR41694">
    <property type="entry name" value="ENDOGENOUS RETROVIRUS GROUP K MEMBER POL PROTEIN"/>
    <property type="match status" value="1"/>
</dbReference>
<dbReference type="PANTHER" id="PTHR41694:SF3">
    <property type="entry name" value="RNA-DIRECTED DNA POLYMERASE-RELATED"/>
    <property type="match status" value="1"/>
</dbReference>
<dbReference type="Pfam" id="PF00607">
    <property type="entry name" value="Gag_p24"/>
    <property type="match status" value="1"/>
</dbReference>
<dbReference type="Pfam" id="PF00552">
    <property type="entry name" value="IN_DBD_C"/>
    <property type="match status" value="1"/>
</dbReference>
<dbReference type="Pfam" id="PF02022">
    <property type="entry name" value="Integrase_Zn"/>
    <property type="match status" value="1"/>
</dbReference>
<dbReference type="Pfam" id="PF02813">
    <property type="entry name" value="Retro_M"/>
    <property type="match status" value="1"/>
</dbReference>
<dbReference type="Pfam" id="PF00665">
    <property type="entry name" value="rve"/>
    <property type="match status" value="1"/>
</dbReference>
<dbReference type="Pfam" id="PF00077">
    <property type="entry name" value="RVP"/>
    <property type="match status" value="1"/>
</dbReference>
<dbReference type="Pfam" id="PF00078">
    <property type="entry name" value="RVT_1"/>
    <property type="match status" value="1"/>
</dbReference>
<dbReference type="Pfam" id="PF06817">
    <property type="entry name" value="RVT_thumb"/>
    <property type="match status" value="1"/>
</dbReference>
<dbReference type="Pfam" id="PF00098">
    <property type="entry name" value="zf-CCHC"/>
    <property type="match status" value="1"/>
</dbReference>
<dbReference type="SMART" id="SM00343">
    <property type="entry name" value="ZnF_C2HC"/>
    <property type="match status" value="2"/>
</dbReference>
<dbReference type="SUPFAM" id="SSF50630">
    <property type="entry name" value="Acid proteases"/>
    <property type="match status" value="1"/>
</dbReference>
<dbReference type="SUPFAM" id="SSF50122">
    <property type="entry name" value="DNA-binding domain of retroviral integrase"/>
    <property type="match status" value="1"/>
</dbReference>
<dbReference type="SUPFAM" id="SSF56672">
    <property type="entry name" value="DNA/RNA polymerases"/>
    <property type="match status" value="1"/>
</dbReference>
<dbReference type="SUPFAM" id="SSF46919">
    <property type="entry name" value="N-terminal Zn binding domain of HIV integrase"/>
    <property type="match status" value="1"/>
</dbReference>
<dbReference type="SUPFAM" id="SSF47836">
    <property type="entry name" value="Retroviral matrix proteins"/>
    <property type="match status" value="1"/>
</dbReference>
<dbReference type="SUPFAM" id="SSF47353">
    <property type="entry name" value="Retrovirus capsid dimerization domain-like"/>
    <property type="match status" value="1"/>
</dbReference>
<dbReference type="SUPFAM" id="SSF47943">
    <property type="entry name" value="Retrovirus capsid protein, N-terminal core domain"/>
    <property type="match status" value="1"/>
</dbReference>
<dbReference type="SUPFAM" id="SSF57756">
    <property type="entry name" value="Retrovirus zinc finger-like domains"/>
    <property type="match status" value="1"/>
</dbReference>
<dbReference type="SUPFAM" id="SSF53098">
    <property type="entry name" value="Ribonuclease H-like"/>
    <property type="match status" value="2"/>
</dbReference>
<dbReference type="PROSITE" id="PS50175">
    <property type="entry name" value="ASP_PROT_RETROV"/>
    <property type="match status" value="1"/>
</dbReference>
<dbReference type="PROSITE" id="PS00141">
    <property type="entry name" value="ASP_PROTEASE"/>
    <property type="match status" value="1"/>
</dbReference>
<dbReference type="PROSITE" id="PS50994">
    <property type="entry name" value="INTEGRASE"/>
    <property type="match status" value="1"/>
</dbReference>
<dbReference type="PROSITE" id="PS51027">
    <property type="entry name" value="INTEGRASE_DBD"/>
    <property type="match status" value="1"/>
</dbReference>
<dbReference type="PROSITE" id="PS50879">
    <property type="entry name" value="RNASE_H_1"/>
    <property type="match status" value="1"/>
</dbReference>
<dbReference type="PROSITE" id="PS50878">
    <property type="entry name" value="RT_POL"/>
    <property type="match status" value="1"/>
</dbReference>
<dbReference type="PROSITE" id="PS50158">
    <property type="entry name" value="ZF_CCHC"/>
    <property type="match status" value="1"/>
</dbReference>
<dbReference type="PROSITE" id="PS50876">
    <property type="entry name" value="ZF_INTEGRASE"/>
    <property type="match status" value="1"/>
</dbReference>